<gene>
    <name evidence="1" type="primary">yaaA</name>
    <name type="ordered locus">SNSL254_A0005</name>
</gene>
<name>YAAA_SALNS</name>
<reference key="1">
    <citation type="journal article" date="2011" name="J. Bacteriol.">
        <title>Comparative genomics of 28 Salmonella enterica isolates: evidence for CRISPR-mediated adaptive sublineage evolution.</title>
        <authorList>
            <person name="Fricke W.F."/>
            <person name="Mammel M.K."/>
            <person name="McDermott P.F."/>
            <person name="Tartera C."/>
            <person name="White D.G."/>
            <person name="Leclerc J.E."/>
            <person name="Ravel J."/>
            <person name="Cebula T.A."/>
        </authorList>
    </citation>
    <scope>NUCLEOTIDE SEQUENCE [LARGE SCALE GENOMIC DNA]</scope>
    <source>
        <strain>SL254</strain>
    </source>
</reference>
<sequence>MLILISPAKTLDYQSPLATTRYTQPELLDHSQQLIQQARQLSAPQISRLMGISDKLADLNATRFHDWQPHFTPDNARQAILAFKGDVYTGLQAETFNDADFDFAQQHLRMLSGLYGVLRPLDLMQPYRLEMGIRLENPRGKDLYQFWGDIITDKLNEALEAQGDRVVVNLASEEYFKSVKPKKLNAELIKPVFLDEKNGKFKVVSFYAKKARGLMSRFIIENRLTKPEQLTAFDREGYFFDEETSTQDELVFKRYEQ</sequence>
<comment type="similarity">
    <text evidence="1">Belongs to the UPF0246 family.</text>
</comment>
<protein>
    <recommendedName>
        <fullName evidence="1">UPF0246 protein YaaA</fullName>
    </recommendedName>
</protein>
<evidence type="ECO:0000255" key="1">
    <source>
        <dbReference type="HAMAP-Rule" id="MF_00652"/>
    </source>
</evidence>
<proteinExistence type="inferred from homology"/>
<feature type="chain" id="PRO_1000131141" description="UPF0246 protein YaaA">
    <location>
        <begin position="1"/>
        <end position="257"/>
    </location>
</feature>
<dbReference type="EMBL" id="CP001113">
    <property type="protein sequence ID" value="ACF62446.1"/>
    <property type="molecule type" value="Genomic_DNA"/>
</dbReference>
<dbReference type="RefSeq" id="WP_000906175.1">
    <property type="nucleotide sequence ID" value="NC_011080.1"/>
</dbReference>
<dbReference type="SMR" id="B4T6C8"/>
<dbReference type="KEGG" id="see:SNSL254_A0005"/>
<dbReference type="HOGENOM" id="CLU_061989_0_0_6"/>
<dbReference type="Proteomes" id="UP000008824">
    <property type="component" value="Chromosome"/>
</dbReference>
<dbReference type="GO" id="GO:0005829">
    <property type="term" value="C:cytosol"/>
    <property type="evidence" value="ECO:0007669"/>
    <property type="project" value="TreeGrafter"/>
</dbReference>
<dbReference type="GO" id="GO:0033194">
    <property type="term" value="P:response to hydroperoxide"/>
    <property type="evidence" value="ECO:0007669"/>
    <property type="project" value="TreeGrafter"/>
</dbReference>
<dbReference type="HAMAP" id="MF_00652">
    <property type="entry name" value="UPF0246"/>
    <property type="match status" value="1"/>
</dbReference>
<dbReference type="InterPro" id="IPR005583">
    <property type="entry name" value="YaaA"/>
</dbReference>
<dbReference type="NCBIfam" id="NF002541">
    <property type="entry name" value="PRK02101.1-1"/>
    <property type="match status" value="1"/>
</dbReference>
<dbReference type="NCBIfam" id="NF002542">
    <property type="entry name" value="PRK02101.1-3"/>
    <property type="match status" value="1"/>
</dbReference>
<dbReference type="PANTHER" id="PTHR30283:SF4">
    <property type="entry name" value="PEROXIDE STRESS RESISTANCE PROTEIN YAAA"/>
    <property type="match status" value="1"/>
</dbReference>
<dbReference type="PANTHER" id="PTHR30283">
    <property type="entry name" value="PEROXIDE STRESS RESPONSE PROTEIN YAAA"/>
    <property type="match status" value="1"/>
</dbReference>
<dbReference type="Pfam" id="PF03883">
    <property type="entry name" value="H2O2_YaaD"/>
    <property type="match status" value="1"/>
</dbReference>
<organism>
    <name type="scientific">Salmonella newport (strain SL254)</name>
    <dbReference type="NCBI Taxonomy" id="423368"/>
    <lineage>
        <taxon>Bacteria</taxon>
        <taxon>Pseudomonadati</taxon>
        <taxon>Pseudomonadota</taxon>
        <taxon>Gammaproteobacteria</taxon>
        <taxon>Enterobacterales</taxon>
        <taxon>Enterobacteriaceae</taxon>
        <taxon>Salmonella</taxon>
    </lineage>
</organism>
<accession>B4T6C8</accession>